<keyword id="KW-1185">Reference proteome</keyword>
<keyword id="KW-0678">Repressor</keyword>
<keyword id="KW-0687">Ribonucleoprotein</keyword>
<keyword id="KW-0689">Ribosomal protein</keyword>
<keyword id="KW-0694">RNA-binding</keyword>
<keyword id="KW-0699">rRNA-binding</keyword>
<keyword id="KW-0810">Translation regulation</keyword>
<keyword id="KW-0820">tRNA-binding</keyword>
<reference key="1">
    <citation type="submission" date="2009-05" db="EMBL/GenBank/DDBJ databases">
        <title>Complete sequence of Tolumonas auensis DSM 9187.</title>
        <authorList>
            <consortium name="US DOE Joint Genome Institute"/>
            <person name="Lucas S."/>
            <person name="Copeland A."/>
            <person name="Lapidus A."/>
            <person name="Glavina del Rio T."/>
            <person name="Tice H."/>
            <person name="Bruce D."/>
            <person name="Goodwin L."/>
            <person name="Pitluck S."/>
            <person name="Chertkov O."/>
            <person name="Brettin T."/>
            <person name="Detter J.C."/>
            <person name="Han C."/>
            <person name="Larimer F."/>
            <person name="Land M."/>
            <person name="Hauser L."/>
            <person name="Kyrpides N."/>
            <person name="Mikhailova N."/>
            <person name="Spring S."/>
            <person name="Beller H."/>
        </authorList>
    </citation>
    <scope>NUCLEOTIDE SEQUENCE [LARGE SCALE GENOMIC DNA]</scope>
    <source>
        <strain>DSM 9187 / NBRC 110442 / TA 4</strain>
    </source>
</reference>
<comment type="function">
    <text evidence="1">Binds directly to 23S rRNA. The L1 stalk is quite mobile in the ribosome, and is involved in E site tRNA release.</text>
</comment>
<comment type="function">
    <text evidence="1">Protein L1 is also a translational repressor protein, it controls the translation of the L11 operon by binding to its mRNA.</text>
</comment>
<comment type="subunit">
    <text evidence="1">Part of the 50S ribosomal subunit.</text>
</comment>
<comment type="similarity">
    <text evidence="1">Belongs to the universal ribosomal protein uL1 family.</text>
</comment>
<feature type="chain" id="PRO_1000214435" description="Large ribosomal subunit protein uL1">
    <location>
        <begin position="1"/>
        <end position="234"/>
    </location>
</feature>
<organism>
    <name type="scientific">Tolumonas auensis (strain DSM 9187 / NBRC 110442 / TA 4)</name>
    <dbReference type="NCBI Taxonomy" id="595494"/>
    <lineage>
        <taxon>Bacteria</taxon>
        <taxon>Pseudomonadati</taxon>
        <taxon>Pseudomonadota</taxon>
        <taxon>Gammaproteobacteria</taxon>
        <taxon>Aeromonadales</taxon>
        <taxon>Aeromonadaceae</taxon>
        <taxon>Tolumonas</taxon>
    </lineage>
</organism>
<sequence>MAKLTKRMRVIREKVDATKEYGITEAVALLKELATAKFVESVDVAVNLGIDARKSDQNVRGATVLPNGTGRTVRVAVFTQGANAEAATAAGADLVGMEDLAEQVKRGELNFDVVIASPDAMRVVGQLGQILGPRGLMPNPKVGTVTPNVAEAVKNAKAGQVRYRNDKNGIIHSTIGKVDFTEAQLKENLESLLVALKKAKPSTSKGQFIKKVSLSTTMGAGMAVDQASLDTKAA</sequence>
<name>RL1_TOLAT</name>
<dbReference type="EMBL" id="CP001616">
    <property type="protein sequence ID" value="ACQ94379.1"/>
    <property type="molecule type" value="Genomic_DNA"/>
</dbReference>
<dbReference type="RefSeq" id="WP_015879828.1">
    <property type="nucleotide sequence ID" value="NC_012691.1"/>
</dbReference>
<dbReference type="SMR" id="C4LBV5"/>
<dbReference type="STRING" id="595494.Tola_2786"/>
<dbReference type="KEGG" id="tau:Tola_2786"/>
<dbReference type="eggNOG" id="COG0081">
    <property type="taxonomic scope" value="Bacteria"/>
</dbReference>
<dbReference type="HOGENOM" id="CLU_062853_0_0_6"/>
<dbReference type="OrthoDB" id="9803740at2"/>
<dbReference type="Proteomes" id="UP000009073">
    <property type="component" value="Chromosome"/>
</dbReference>
<dbReference type="GO" id="GO:0022625">
    <property type="term" value="C:cytosolic large ribosomal subunit"/>
    <property type="evidence" value="ECO:0007669"/>
    <property type="project" value="TreeGrafter"/>
</dbReference>
<dbReference type="GO" id="GO:0019843">
    <property type="term" value="F:rRNA binding"/>
    <property type="evidence" value="ECO:0007669"/>
    <property type="project" value="UniProtKB-UniRule"/>
</dbReference>
<dbReference type="GO" id="GO:0003735">
    <property type="term" value="F:structural constituent of ribosome"/>
    <property type="evidence" value="ECO:0007669"/>
    <property type="project" value="InterPro"/>
</dbReference>
<dbReference type="GO" id="GO:0000049">
    <property type="term" value="F:tRNA binding"/>
    <property type="evidence" value="ECO:0007669"/>
    <property type="project" value="UniProtKB-KW"/>
</dbReference>
<dbReference type="GO" id="GO:0006417">
    <property type="term" value="P:regulation of translation"/>
    <property type="evidence" value="ECO:0007669"/>
    <property type="project" value="UniProtKB-KW"/>
</dbReference>
<dbReference type="GO" id="GO:0006412">
    <property type="term" value="P:translation"/>
    <property type="evidence" value="ECO:0007669"/>
    <property type="project" value="UniProtKB-UniRule"/>
</dbReference>
<dbReference type="CDD" id="cd00403">
    <property type="entry name" value="Ribosomal_L1"/>
    <property type="match status" value="1"/>
</dbReference>
<dbReference type="FunFam" id="3.40.50.790:FF:000001">
    <property type="entry name" value="50S ribosomal protein L1"/>
    <property type="match status" value="1"/>
</dbReference>
<dbReference type="Gene3D" id="3.30.190.20">
    <property type="match status" value="1"/>
</dbReference>
<dbReference type="Gene3D" id="3.40.50.790">
    <property type="match status" value="1"/>
</dbReference>
<dbReference type="HAMAP" id="MF_01318_B">
    <property type="entry name" value="Ribosomal_uL1_B"/>
    <property type="match status" value="1"/>
</dbReference>
<dbReference type="InterPro" id="IPR005878">
    <property type="entry name" value="Ribosom_uL1_bac-type"/>
</dbReference>
<dbReference type="InterPro" id="IPR002143">
    <property type="entry name" value="Ribosomal_uL1"/>
</dbReference>
<dbReference type="InterPro" id="IPR023674">
    <property type="entry name" value="Ribosomal_uL1-like"/>
</dbReference>
<dbReference type="InterPro" id="IPR028364">
    <property type="entry name" value="Ribosomal_uL1/biogenesis"/>
</dbReference>
<dbReference type="InterPro" id="IPR016095">
    <property type="entry name" value="Ribosomal_uL1_3-a/b-sand"/>
</dbReference>
<dbReference type="InterPro" id="IPR023673">
    <property type="entry name" value="Ribosomal_uL1_CS"/>
</dbReference>
<dbReference type="NCBIfam" id="TIGR01169">
    <property type="entry name" value="rplA_bact"/>
    <property type="match status" value="1"/>
</dbReference>
<dbReference type="PANTHER" id="PTHR36427">
    <property type="entry name" value="54S RIBOSOMAL PROTEIN L1, MITOCHONDRIAL"/>
    <property type="match status" value="1"/>
</dbReference>
<dbReference type="PANTHER" id="PTHR36427:SF3">
    <property type="entry name" value="LARGE RIBOSOMAL SUBUNIT PROTEIN UL1M"/>
    <property type="match status" value="1"/>
</dbReference>
<dbReference type="Pfam" id="PF00687">
    <property type="entry name" value="Ribosomal_L1"/>
    <property type="match status" value="1"/>
</dbReference>
<dbReference type="PIRSF" id="PIRSF002155">
    <property type="entry name" value="Ribosomal_L1"/>
    <property type="match status" value="1"/>
</dbReference>
<dbReference type="SUPFAM" id="SSF56808">
    <property type="entry name" value="Ribosomal protein L1"/>
    <property type="match status" value="1"/>
</dbReference>
<dbReference type="PROSITE" id="PS01199">
    <property type="entry name" value="RIBOSOMAL_L1"/>
    <property type="match status" value="1"/>
</dbReference>
<proteinExistence type="inferred from homology"/>
<evidence type="ECO:0000255" key="1">
    <source>
        <dbReference type="HAMAP-Rule" id="MF_01318"/>
    </source>
</evidence>
<evidence type="ECO:0000305" key="2"/>
<protein>
    <recommendedName>
        <fullName evidence="1">Large ribosomal subunit protein uL1</fullName>
    </recommendedName>
    <alternativeName>
        <fullName evidence="2">50S ribosomal protein L1</fullName>
    </alternativeName>
</protein>
<gene>
    <name evidence="1" type="primary">rplA</name>
    <name type="ordered locus">Tola_2786</name>
</gene>
<accession>C4LBV5</accession>